<proteinExistence type="inferred from homology"/>
<sequence length="459" mass="49423">MSNRFAVILAAGKGTRMKSKLYKVLHPVCGKPMVQHVVDQVSQLGLQKLVTVVGHGAEMVQEQLGNVSEFALQAEQLGTAHAVDQAAGVLANEEGTTLVICGDTPLITAETMEALLQQHKEAGAMATVLTAYIEEPAGYGRIVRNENGHVEKIVEHKDANEKELAIKEINTGTYCFDNKALFASLSKVSNDNVQGEYYLPDVIEILKNEGHIVSAYQTEHFDETLGVNDRVALSQAEIIMKNRINRKNMVNGVTIIDPSNTYISADAIIGSDTVLHPGTIIEGNTVIGSDCEIGPHTVIRDSEIGDRTTIRQSTVHDSKLGTEVSVGPFAHIRPDSVIGDEVRVGNFVEIKKTVFGNRSKASHLSYIGDAQVGEDVNLGCGSITVNYDGKNKFKTVIGNGVFIGCNSNLVAPVTVEDGAYVAAGSTITENVPSKALSVARARQVNKEDYVDQLLNKKKS</sequence>
<accession>A0R8C1</accession>
<reference key="1">
    <citation type="journal article" date="2007" name="J. Bacteriol.">
        <title>The complete genome sequence of Bacillus thuringiensis Al Hakam.</title>
        <authorList>
            <person name="Challacombe J.F."/>
            <person name="Altherr M.R."/>
            <person name="Xie G."/>
            <person name="Bhotika S.S."/>
            <person name="Brown N."/>
            <person name="Bruce D."/>
            <person name="Campbell C.S."/>
            <person name="Campbell M.L."/>
            <person name="Chen J."/>
            <person name="Chertkov O."/>
            <person name="Cleland C."/>
            <person name="Dimitrijevic M."/>
            <person name="Doggett N.A."/>
            <person name="Fawcett J.J."/>
            <person name="Glavina T."/>
            <person name="Goodwin L.A."/>
            <person name="Green L.D."/>
            <person name="Han C.S."/>
            <person name="Hill K.K."/>
            <person name="Hitchcock P."/>
            <person name="Jackson P.J."/>
            <person name="Keim P."/>
            <person name="Kewalramani A.R."/>
            <person name="Longmire J."/>
            <person name="Lucas S."/>
            <person name="Malfatti S."/>
            <person name="Martinez D."/>
            <person name="McMurry K."/>
            <person name="Meincke L.J."/>
            <person name="Misra M."/>
            <person name="Moseman B.L."/>
            <person name="Mundt M."/>
            <person name="Munk A.C."/>
            <person name="Okinaka R.T."/>
            <person name="Parson-Quintana B."/>
            <person name="Reilly L.P."/>
            <person name="Richardson P."/>
            <person name="Robinson D.L."/>
            <person name="Saunders E."/>
            <person name="Tapia R."/>
            <person name="Tesmer J.G."/>
            <person name="Thayer N."/>
            <person name="Thompson L.S."/>
            <person name="Tice H."/>
            <person name="Ticknor L.O."/>
            <person name="Wills P.L."/>
            <person name="Gilna P."/>
            <person name="Brettin T.S."/>
        </authorList>
    </citation>
    <scope>NUCLEOTIDE SEQUENCE [LARGE SCALE GENOMIC DNA]</scope>
    <source>
        <strain>Al Hakam</strain>
    </source>
</reference>
<organism>
    <name type="scientific">Bacillus thuringiensis (strain Al Hakam)</name>
    <dbReference type="NCBI Taxonomy" id="412694"/>
    <lineage>
        <taxon>Bacteria</taxon>
        <taxon>Bacillati</taxon>
        <taxon>Bacillota</taxon>
        <taxon>Bacilli</taxon>
        <taxon>Bacillales</taxon>
        <taxon>Bacillaceae</taxon>
        <taxon>Bacillus</taxon>
        <taxon>Bacillus cereus group</taxon>
    </lineage>
</organism>
<feature type="chain" id="PRO_0000337708" description="Bifunctional protein GlmU">
    <location>
        <begin position="1"/>
        <end position="459"/>
    </location>
</feature>
<feature type="region of interest" description="Pyrophosphorylase" evidence="1">
    <location>
        <begin position="1"/>
        <end position="230"/>
    </location>
</feature>
<feature type="region of interest" description="Linker" evidence="1">
    <location>
        <begin position="231"/>
        <end position="251"/>
    </location>
</feature>
<feature type="region of interest" description="N-acetyltransferase" evidence="1">
    <location>
        <begin position="252"/>
        <end position="459"/>
    </location>
</feature>
<feature type="active site" description="Proton acceptor" evidence="1">
    <location>
        <position position="363"/>
    </location>
</feature>
<feature type="binding site" evidence="1">
    <location>
        <begin position="9"/>
        <end position="12"/>
    </location>
    <ligand>
        <name>UDP-N-acetyl-alpha-D-glucosamine</name>
        <dbReference type="ChEBI" id="CHEBI:57705"/>
    </ligand>
</feature>
<feature type="binding site" evidence="1">
    <location>
        <position position="23"/>
    </location>
    <ligand>
        <name>UDP-N-acetyl-alpha-D-glucosamine</name>
        <dbReference type="ChEBI" id="CHEBI:57705"/>
    </ligand>
</feature>
<feature type="binding site" evidence="1">
    <location>
        <position position="73"/>
    </location>
    <ligand>
        <name>UDP-N-acetyl-alpha-D-glucosamine</name>
        <dbReference type="ChEBI" id="CHEBI:57705"/>
    </ligand>
</feature>
<feature type="binding site" evidence="1">
    <location>
        <begin position="78"/>
        <end position="79"/>
    </location>
    <ligand>
        <name>UDP-N-acetyl-alpha-D-glucosamine</name>
        <dbReference type="ChEBI" id="CHEBI:57705"/>
    </ligand>
</feature>
<feature type="binding site" evidence="1">
    <location>
        <position position="103"/>
    </location>
    <ligand>
        <name>Mg(2+)</name>
        <dbReference type="ChEBI" id="CHEBI:18420"/>
    </ligand>
</feature>
<feature type="binding site" evidence="1">
    <location>
        <position position="140"/>
    </location>
    <ligand>
        <name>UDP-N-acetyl-alpha-D-glucosamine</name>
        <dbReference type="ChEBI" id="CHEBI:57705"/>
    </ligand>
</feature>
<feature type="binding site" evidence="1">
    <location>
        <position position="155"/>
    </location>
    <ligand>
        <name>UDP-N-acetyl-alpha-D-glucosamine</name>
        <dbReference type="ChEBI" id="CHEBI:57705"/>
    </ligand>
</feature>
<feature type="binding site" evidence="1">
    <location>
        <position position="170"/>
    </location>
    <ligand>
        <name>UDP-N-acetyl-alpha-D-glucosamine</name>
        <dbReference type="ChEBI" id="CHEBI:57705"/>
    </ligand>
</feature>
<feature type="binding site" evidence="1">
    <location>
        <position position="228"/>
    </location>
    <ligand>
        <name>Mg(2+)</name>
        <dbReference type="ChEBI" id="CHEBI:18420"/>
    </ligand>
</feature>
<feature type="binding site" evidence="1">
    <location>
        <position position="228"/>
    </location>
    <ligand>
        <name>UDP-N-acetyl-alpha-D-glucosamine</name>
        <dbReference type="ChEBI" id="CHEBI:57705"/>
    </ligand>
</feature>
<feature type="binding site" evidence="1">
    <location>
        <position position="333"/>
    </location>
    <ligand>
        <name>UDP-N-acetyl-alpha-D-glucosamine</name>
        <dbReference type="ChEBI" id="CHEBI:57705"/>
    </ligand>
</feature>
<feature type="binding site" evidence="1">
    <location>
        <position position="351"/>
    </location>
    <ligand>
        <name>UDP-N-acetyl-alpha-D-glucosamine</name>
        <dbReference type="ChEBI" id="CHEBI:57705"/>
    </ligand>
</feature>
<feature type="binding site" evidence="1">
    <location>
        <position position="366"/>
    </location>
    <ligand>
        <name>UDP-N-acetyl-alpha-D-glucosamine</name>
        <dbReference type="ChEBI" id="CHEBI:57705"/>
    </ligand>
</feature>
<feature type="binding site" evidence="1">
    <location>
        <position position="377"/>
    </location>
    <ligand>
        <name>UDP-N-acetyl-alpha-D-glucosamine</name>
        <dbReference type="ChEBI" id="CHEBI:57705"/>
    </ligand>
</feature>
<feature type="binding site" evidence="1">
    <location>
        <begin position="386"/>
        <end position="387"/>
    </location>
    <ligand>
        <name>acetyl-CoA</name>
        <dbReference type="ChEBI" id="CHEBI:57288"/>
    </ligand>
</feature>
<feature type="binding site" evidence="1">
    <location>
        <position position="423"/>
    </location>
    <ligand>
        <name>acetyl-CoA</name>
        <dbReference type="ChEBI" id="CHEBI:57288"/>
    </ligand>
</feature>
<feature type="binding site" evidence="1">
    <location>
        <position position="440"/>
    </location>
    <ligand>
        <name>acetyl-CoA</name>
        <dbReference type="ChEBI" id="CHEBI:57288"/>
    </ligand>
</feature>
<comment type="function">
    <text evidence="1">Catalyzes the last two sequential reactions in the de novo biosynthetic pathway for UDP-N-acetylglucosamine (UDP-GlcNAc). The C-terminal domain catalyzes the transfer of acetyl group from acetyl coenzyme A to glucosamine-1-phosphate (GlcN-1-P) to produce N-acetylglucosamine-1-phosphate (GlcNAc-1-P), which is converted into UDP-GlcNAc by the transfer of uridine 5-monophosphate (from uridine 5-triphosphate), a reaction catalyzed by the N-terminal domain.</text>
</comment>
<comment type="catalytic activity">
    <reaction evidence="1">
        <text>alpha-D-glucosamine 1-phosphate + acetyl-CoA = N-acetyl-alpha-D-glucosamine 1-phosphate + CoA + H(+)</text>
        <dbReference type="Rhea" id="RHEA:13725"/>
        <dbReference type="ChEBI" id="CHEBI:15378"/>
        <dbReference type="ChEBI" id="CHEBI:57287"/>
        <dbReference type="ChEBI" id="CHEBI:57288"/>
        <dbReference type="ChEBI" id="CHEBI:57776"/>
        <dbReference type="ChEBI" id="CHEBI:58516"/>
        <dbReference type="EC" id="2.3.1.157"/>
    </reaction>
</comment>
<comment type="catalytic activity">
    <reaction evidence="1">
        <text>N-acetyl-alpha-D-glucosamine 1-phosphate + UTP + H(+) = UDP-N-acetyl-alpha-D-glucosamine + diphosphate</text>
        <dbReference type="Rhea" id="RHEA:13509"/>
        <dbReference type="ChEBI" id="CHEBI:15378"/>
        <dbReference type="ChEBI" id="CHEBI:33019"/>
        <dbReference type="ChEBI" id="CHEBI:46398"/>
        <dbReference type="ChEBI" id="CHEBI:57705"/>
        <dbReference type="ChEBI" id="CHEBI:57776"/>
        <dbReference type="EC" id="2.7.7.23"/>
    </reaction>
</comment>
<comment type="cofactor">
    <cofactor evidence="1">
        <name>Mg(2+)</name>
        <dbReference type="ChEBI" id="CHEBI:18420"/>
    </cofactor>
    <text evidence="1">Binds 1 Mg(2+) ion per subunit.</text>
</comment>
<comment type="pathway">
    <text evidence="1">Nucleotide-sugar biosynthesis; UDP-N-acetyl-alpha-D-glucosamine biosynthesis; N-acetyl-alpha-D-glucosamine 1-phosphate from alpha-D-glucosamine 6-phosphate (route II): step 2/2.</text>
</comment>
<comment type="pathway">
    <text evidence="1">Nucleotide-sugar biosynthesis; UDP-N-acetyl-alpha-D-glucosamine biosynthesis; UDP-N-acetyl-alpha-D-glucosamine from N-acetyl-alpha-D-glucosamine 1-phosphate: step 1/1.</text>
</comment>
<comment type="pathway">
    <text evidence="1">Bacterial outer membrane biogenesis; LPS lipid A biosynthesis.</text>
</comment>
<comment type="subunit">
    <text evidence="1">Homotrimer.</text>
</comment>
<comment type="subcellular location">
    <subcellularLocation>
        <location evidence="1">Cytoplasm</location>
    </subcellularLocation>
</comment>
<comment type="similarity">
    <text evidence="1">In the N-terminal section; belongs to the N-acetylglucosamine-1-phosphate uridyltransferase family.</text>
</comment>
<comment type="similarity">
    <text evidence="1">In the C-terminal section; belongs to the transferase hexapeptide repeat family.</text>
</comment>
<comment type="sequence caution" evidence="2">
    <conflict type="erroneous initiation">
        <sequence resource="EMBL-CDS" id="ABK83464"/>
    </conflict>
    <text>Extended N-terminus.</text>
</comment>
<protein>
    <recommendedName>
        <fullName evidence="1">Bifunctional protein GlmU</fullName>
    </recommendedName>
    <domain>
        <recommendedName>
            <fullName evidence="1">UDP-N-acetylglucosamine pyrophosphorylase</fullName>
            <ecNumber evidence="1">2.7.7.23</ecNumber>
        </recommendedName>
        <alternativeName>
            <fullName evidence="1">N-acetylglucosamine-1-phosphate uridyltransferase</fullName>
        </alternativeName>
    </domain>
    <domain>
        <recommendedName>
            <fullName evidence="1">Glucosamine-1-phosphate N-acetyltransferase</fullName>
            <ecNumber evidence="1">2.3.1.157</ecNumber>
        </recommendedName>
    </domain>
</protein>
<keyword id="KW-0012">Acyltransferase</keyword>
<keyword id="KW-0133">Cell shape</keyword>
<keyword id="KW-0961">Cell wall biogenesis/degradation</keyword>
<keyword id="KW-0963">Cytoplasm</keyword>
<keyword id="KW-0460">Magnesium</keyword>
<keyword id="KW-0479">Metal-binding</keyword>
<keyword id="KW-0511">Multifunctional enzyme</keyword>
<keyword id="KW-0548">Nucleotidyltransferase</keyword>
<keyword id="KW-0573">Peptidoglycan synthesis</keyword>
<keyword id="KW-0677">Repeat</keyword>
<keyword id="KW-0808">Transferase</keyword>
<gene>
    <name evidence="1" type="primary">glmU</name>
    <name type="ordered locus">BALH_0044</name>
</gene>
<dbReference type="EC" id="2.7.7.23" evidence="1"/>
<dbReference type="EC" id="2.3.1.157" evidence="1"/>
<dbReference type="EMBL" id="CP000485">
    <property type="protein sequence ID" value="ABK83464.1"/>
    <property type="status" value="ALT_INIT"/>
    <property type="molecule type" value="Genomic_DNA"/>
</dbReference>
<dbReference type="RefSeq" id="WP_000071032.1">
    <property type="nucleotide sequence ID" value="NC_008600.1"/>
</dbReference>
<dbReference type="SMR" id="A0R8C1"/>
<dbReference type="GeneID" id="45020089"/>
<dbReference type="KEGG" id="btl:BALH_0044"/>
<dbReference type="HOGENOM" id="CLU_029499_15_2_9"/>
<dbReference type="UniPathway" id="UPA00113">
    <property type="reaction ID" value="UER00532"/>
</dbReference>
<dbReference type="UniPathway" id="UPA00113">
    <property type="reaction ID" value="UER00533"/>
</dbReference>
<dbReference type="UniPathway" id="UPA00973"/>
<dbReference type="GO" id="GO:0005737">
    <property type="term" value="C:cytoplasm"/>
    <property type="evidence" value="ECO:0007669"/>
    <property type="project" value="UniProtKB-SubCell"/>
</dbReference>
<dbReference type="GO" id="GO:0016020">
    <property type="term" value="C:membrane"/>
    <property type="evidence" value="ECO:0007669"/>
    <property type="project" value="GOC"/>
</dbReference>
<dbReference type="GO" id="GO:0019134">
    <property type="term" value="F:glucosamine-1-phosphate N-acetyltransferase activity"/>
    <property type="evidence" value="ECO:0007669"/>
    <property type="project" value="UniProtKB-UniRule"/>
</dbReference>
<dbReference type="GO" id="GO:0000287">
    <property type="term" value="F:magnesium ion binding"/>
    <property type="evidence" value="ECO:0007669"/>
    <property type="project" value="UniProtKB-UniRule"/>
</dbReference>
<dbReference type="GO" id="GO:0003977">
    <property type="term" value="F:UDP-N-acetylglucosamine diphosphorylase activity"/>
    <property type="evidence" value="ECO:0007669"/>
    <property type="project" value="UniProtKB-UniRule"/>
</dbReference>
<dbReference type="GO" id="GO:0000902">
    <property type="term" value="P:cell morphogenesis"/>
    <property type="evidence" value="ECO:0007669"/>
    <property type="project" value="UniProtKB-UniRule"/>
</dbReference>
<dbReference type="GO" id="GO:0071555">
    <property type="term" value="P:cell wall organization"/>
    <property type="evidence" value="ECO:0007669"/>
    <property type="project" value="UniProtKB-KW"/>
</dbReference>
<dbReference type="GO" id="GO:0009245">
    <property type="term" value="P:lipid A biosynthetic process"/>
    <property type="evidence" value="ECO:0007669"/>
    <property type="project" value="UniProtKB-UniRule"/>
</dbReference>
<dbReference type="GO" id="GO:0009252">
    <property type="term" value="P:peptidoglycan biosynthetic process"/>
    <property type="evidence" value="ECO:0007669"/>
    <property type="project" value="UniProtKB-UniRule"/>
</dbReference>
<dbReference type="GO" id="GO:0008360">
    <property type="term" value="P:regulation of cell shape"/>
    <property type="evidence" value="ECO:0007669"/>
    <property type="project" value="UniProtKB-KW"/>
</dbReference>
<dbReference type="GO" id="GO:0006048">
    <property type="term" value="P:UDP-N-acetylglucosamine biosynthetic process"/>
    <property type="evidence" value="ECO:0007669"/>
    <property type="project" value="UniProtKB-UniPathway"/>
</dbReference>
<dbReference type="CDD" id="cd02540">
    <property type="entry name" value="GT2_GlmU_N_bac"/>
    <property type="match status" value="1"/>
</dbReference>
<dbReference type="CDD" id="cd03353">
    <property type="entry name" value="LbH_GlmU_C"/>
    <property type="match status" value="1"/>
</dbReference>
<dbReference type="FunFam" id="2.160.10.10:FF:000016">
    <property type="entry name" value="Bifunctional protein GlmU"/>
    <property type="match status" value="1"/>
</dbReference>
<dbReference type="FunFam" id="3.90.550.10:FF:000006">
    <property type="entry name" value="Bifunctional protein GlmU"/>
    <property type="match status" value="1"/>
</dbReference>
<dbReference type="Gene3D" id="2.160.10.10">
    <property type="entry name" value="Hexapeptide repeat proteins"/>
    <property type="match status" value="1"/>
</dbReference>
<dbReference type="Gene3D" id="3.90.550.10">
    <property type="entry name" value="Spore Coat Polysaccharide Biosynthesis Protein SpsA, Chain A"/>
    <property type="match status" value="1"/>
</dbReference>
<dbReference type="HAMAP" id="MF_01631">
    <property type="entry name" value="GlmU"/>
    <property type="match status" value="1"/>
</dbReference>
<dbReference type="InterPro" id="IPR005882">
    <property type="entry name" value="Bifunctional_GlmU"/>
</dbReference>
<dbReference type="InterPro" id="IPR050065">
    <property type="entry name" value="GlmU-like"/>
</dbReference>
<dbReference type="InterPro" id="IPR038009">
    <property type="entry name" value="GlmU_C_LbH"/>
</dbReference>
<dbReference type="InterPro" id="IPR001451">
    <property type="entry name" value="Hexapep"/>
</dbReference>
<dbReference type="InterPro" id="IPR018357">
    <property type="entry name" value="Hexapep_transf_CS"/>
</dbReference>
<dbReference type="InterPro" id="IPR005835">
    <property type="entry name" value="NTP_transferase_dom"/>
</dbReference>
<dbReference type="InterPro" id="IPR029044">
    <property type="entry name" value="Nucleotide-diphossugar_trans"/>
</dbReference>
<dbReference type="InterPro" id="IPR011004">
    <property type="entry name" value="Trimer_LpxA-like_sf"/>
</dbReference>
<dbReference type="NCBIfam" id="TIGR01173">
    <property type="entry name" value="glmU"/>
    <property type="match status" value="1"/>
</dbReference>
<dbReference type="NCBIfam" id="NF010934">
    <property type="entry name" value="PRK14354.1"/>
    <property type="match status" value="1"/>
</dbReference>
<dbReference type="PANTHER" id="PTHR43584:SF3">
    <property type="entry name" value="BIFUNCTIONAL PROTEIN GLMU"/>
    <property type="match status" value="1"/>
</dbReference>
<dbReference type="PANTHER" id="PTHR43584">
    <property type="entry name" value="NUCLEOTIDYL TRANSFERASE"/>
    <property type="match status" value="1"/>
</dbReference>
<dbReference type="Pfam" id="PF00132">
    <property type="entry name" value="Hexapep"/>
    <property type="match status" value="3"/>
</dbReference>
<dbReference type="Pfam" id="PF00483">
    <property type="entry name" value="NTP_transferase"/>
    <property type="match status" value="1"/>
</dbReference>
<dbReference type="SUPFAM" id="SSF53448">
    <property type="entry name" value="Nucleotide-diphospho-sugar transferases"/>
    <property type="match status" value="1"/>
</dbReference>
<dbReference type="SUPFAM" id="SSF51161">
    <property type="entry name" value="Trimeric LpxA-like enzymes"/>
    <property type="match status" value="1"/>
</dbReference>
<dbReference type="PROSITE" id="PS00101">
    <property type="entry name" value="HEXAPEP_TRANSFERASES"/>
    <property type="match status" value="1"/>
</dbReference>
<evidence type="ECO:0000255" key="1">
    <source>
        <dbReference type="HAMAP-Rule" id="MF_01631"/>
    </source>
</evidence>
<evidence type="ECO:0000305" key="2"/>
<name>GLMU_BACAH</name>